<protein>
    <recommendedName>
        <fullName>Peptidyl-prolyl cis-trans isomerase F, mitochondrial</fullName>
        <shortName>PPIase F</shortName>
        <ecNumber evidence="2">5.2.1.8</ecNumber>
    </recommendedName>
    <alternativeName>
        <fullName>Cyclophilin D</fullName>
        <shortName>CyP-D</shortName>
        <shortName>CypD</shortName>
    </alternativeName>
    <alternativeName>
        <fullName>Cyclophilin F</fullName>
    </alternativeName>
    <alternativeName>
        <fullName>Rotamase F</fullName>
    </alternativeName>
</protein>
<name>PPIF_BOVIN</name>
<evidence type="ECO:0000250" key="1">
    <source>
        <dbReference type="UniProtKB" id="P29117"/>
    </source>
</evidence>
<evidence type="ECO:0000250" key="2">
    <source>
        <dbReference type="UniProtKB" id="P30405"/>
    </source>
</evidence>
<evidence type="ECO:0000250" key="3">
    <source>
        <dbReference type="UniProtKB" id="Q99KR7"/>
    </source>
</evidence>
<evidence type="ECO:0000255" key="4">
    <source>
        <dbReference type="PROSITE-ProRule" id="PRU00156"/>
    </source>
</evidence>
<evidence type="ECO:0000269" key="5">
    <source>
    </source>
</evidence>
<evidence type="ECO:0000305" key="6"/>
<feature type="transit peptide" description="Mitochondrion">
    <location>
        <begin position="1"/>
        <end position="30"/>
    </location>
</feature>
<feature type="chain" id="PRO_0000064149" description="Peptidyl-prolyl cis-trans isomerase F, mitochondrial">
    <location>
        <begin position="31"/>
        <end position="208"/>
    </location>
</feature>
<feature type="domain" description="PPIase cyclophilin-type" evidence="4">
    <location>
        <begin position="50"/>
        <end position="206"/>
    </location>
</feature>
<feature type="modified residue" description="N6-acetyllysine; alternate" evidence="3">
    <location>
        <position position="68"/>
    </location>
</feature>
<feature type="modified residue" description="N6-succinyllysine; alternate" evidence="3">
    <location>
        <position position="68"/>
    </location>
</feature>
<feature type="modified residue" description="N6-succinyllysine" evidence="3">
    <location>
        <position position="87"/>
    </location>
</feature>
<feature type="modified residue" description="N6-acetyllysine" evidence="3">
    <location>
        <position position="168"/>
    </location>
</feature>
<feature type="modified residue" description="N6-succinyllysine" evidence="3">
    <location>
        <position position="176"/>
    </location>
</feature>
<feature type="modified residue" description="N6-succinyllysine" evidence="3">
    <location>
        <position position="191"/>
    </location>
</feature>
<feature type="modified residue" description="S-nitrosocysteine" evidence="3">
    <location>
        <position position="204"/>
    </location>
</feature>
<feature type="sequence conflict" description="In Ref. 1; AAT02663 and 2; EH176460." evidence="6" ref="1 2">
    <original>A</original>
    <variation>V</variation>
    <location>
        <position position="30"/>
    </location>
</feature>
<dbReference type="EC" id="5.2.1.8" evidence="2"/>
<dbReference type="EMBL" id="AY594335">
    <property type="protein sequence ID" value="AAT02663.1"/>
    <property type="status" value="ALT_SEQ"/>
    <property type="molecule type" value="mRNA"/>
</dbReference>
<dbReference type="EMBL" id="EH176460">
    <property type="status" value="NOT_ANNOTATED_CDS"/>
    <property type="molecule type" value="mRNA"/>
</dbReference>
<dbReference type="EMBL" id="AAFC03123307">
    <property type="status" value="NOT_ANNOTATED_CDS"/>
    <property type="molecule type" value="Genomic_DNA"/>
</dbReference>
<dbReference type="PIR" id="PC1237">
    <property type="entry name" value="PC1237"/>
</dbReference>
<dbReference type="RefSeq" id="NP_001001597.1">
    <property type="nucleotide sequence ID" value="NM_001001597.1"/>
</dbReference>
<dbReference type="BMRB" id="P30404"/>
<dbReference type="SMR" id="P30404"/>
<dbReference type="FunCoup" id="P30404">
    <property type="interactions" value="1766"/>
</dbReference>
<dbReference type="STRING" id="9913.ENSBTAP00000022213"/>
<dbReference type="PaxDb" id="9913-ENSBTAP00000022213"/>
<dbReference type="PeptideAtlas" id="P30404"/>
<dbReference type="DNASU" id="414346"/>
<dbReference type="GeneID" id="414346"/>
<dbReference type="KEGG" id="bta:414346"/>
<dbReference type="CTD" id="10105"/>
<dbReference type="eggNOG" id="KOG0865">
    <property type="taxonomic scope" value="Eukaryota"/>
</dbReference>
<dbReference type="HOGENOM" id="CLU_012062_4_3_1"/>
<dbReference type="InParanoid" id="P30404"/>
<dbReference type="OrthoDB" id="193499at2759"/>
<dbReference type="Proteomes" id="UP000009136">
    <property type="component" value="Unplaced"/>
</dbReference>
<dbReference type="GO" id="GO:0005737">
    <property type="term" value="C:cytoplasm"/>
    <property type="evidence" value="ECO:0000318"/>
    <property type="project" value="GO_Central"/>
</dbReference>
<dbReference type="GO" id="GO:0005759">
    <property type="term" value="C:mitochondrial matrix"/>
    <property type="evidence" value="ECO:0007669"/>
    <property type="project" value="UniProtKB-SubCell"/>
</dbReference>
<dbReference type="GO" id="GO:0005757">
    <property type="term" value="C:mitochondrial permeability transition pore complex"/>
    <property type="evidence" value="ECO:0000250"/>
    <property type="project" value="UniProtKB"/>
</dbReference>
<dbReference type="GO" id="GO:0005739">
    <property type="term" value="C:mitochondrion"/>
    <property type="evidence" value="ECO:0000318"/>
    <property type="project" value="GO_Central"/>
</dbReference>
<dbReference type="GO" id="GO:0016018">
    <property type="term" value="F:cyclosporin A binding"/>
    <property type="evidence" value="ECO:0000318"/>
    <property type="project" value="GO_Central"/>
</dbReference>
<dbReference type="GO" id="GO:0003755">
    <property type="term" value="F:peptidyl-prolyl cis-trans isomerase activity"/>
    <property type="evidence" value="ECO:0000250"/>
    <property type="project" value="UniProtKB"/>
</dbReference>
<dbReference type="GO" id="GO:0006915">
    <property type="term" value="P:apoptotic process"/>
    <property type="evidence" value="ECO:0007669"/>
    <property type="project" value="UniProtKB-KW"/>
</dbReference>
<dbReference type="GO" id="GO:0071243">
    <property type="term" value="P:cellular response to arsenic-containing substance"/>
    <property type="evidence" value="ECO:0000250"/>
    <property type="project" value="UniProtKB"/>
</dbReference>
<dbReference type="GO" id="GO:0071277">
    <property type="term" value="P:cellular response to calcium ion"/>
    <property type="evidence" value="ECO:0000250"/>
    <property type="project" value="UniProtKB"/>
</dbReference>
<dbReference type="GO" id="GO:0070301">
    <property type="term" value="P:cellular response to hydrogen peroxide"/>
    <property type="evidence" value="ECO:0000250"/>
    <property type="project" value="UniProtKB"/>
</dbReference>
<dbReference type="GO" id="GO:1902686">
    <property type="term" value="P:mitochondrial outer membrane permeabilization involved in programmed cell death"/>
    <property type="evidence" value="ECO:0000250"/>
    <property type="project" value="UniProtKB"/>
</dbReference>
<dbReference type="GO" id="GO:0043066">
    <property type="term" value="P:negative regulation of apoptotic process"/>
    <property type="evidence" value="ECO:0000250"/>
    <property type="project" value="UniProtKB"/>
</dbReference>
<dbReference type="GO" id="GO:0032780">
    <property type="term" value="P:negative regulation of ATP-dependent activity"/>
    <property type="evidence" value="ECO:0000250"/>
    <property type="project" value="UniProtKB"/>
</dbReference>
<dbReference type="GO" id="GO:2001243">
    <property type="term" value="P:negative regulation of intrinsic apoptotic signaling pathway"/>
    <property type="evidence" value="ECO:0000250"/>
    <property type="project" value="UniProtKB"/>
</dbReference>
<dbReference type="GO" id="GO:0090324">
    <property type="term" value="P:negative regulation of oxidative phosphorylation"/>
    <property type="evidence" value="ECO:0000250"/>
    <property type="project" value="UniProtKB"/>
</dbReference>
<dbReference type="GO" id="GO:2000276">
    <property type="term" value="P:negative regulation of oxidative phosphorylation uncoupler activity"/>
    <property type="evidence" value="ECO:0000250"/>
    <property type="project" value="UniProtKB"/>
</dbReference>
<dbReference type="GO" id="GO:0090201">
    <property type="term" value="P:negative regulation of release of cytochrome c from mitochondria"/>
    <property type="evidence" value="ECO:0000250"/>
    <property type="project" value="UniProtKB"/>
</dbReference>
<dbReference type="GO" id="GO:0006457">
    <property type="term" value="P:protein folding"/>
    <property type="evidence" value="ECO:0000318"/>
    <property type="project" value="GO_Central"/>
</dbReference>
<dbReference type="GO" id="GO:0046902">
    <property type="term" value="P:regulation of mitochondrial membrane permeability"/>
    <property type="evidence" value="ECO:0000250"/>
    <property type="project" value="UniProtKB"/>
</dbReference>
<dbReference type="GO" id="GO:1902445">
    <property type="term" value="P:regulation of mitochondrial membrane permeability involved in programmed necrotic cell death"/>
    <property type="evidence" value="ECO:0000250"/>
    <property type="project" value="UniProtKB"/>
</dbReference>
<dbReference type="GO" id="GO:0010849">
    <property type="term" value="P:regulation of proton-transporting ATPase activity, rotational mechanism"/>
    <property type="evidence" value="ECO:0000250"/>
    <property type="project" value="UniProtKB"/>
</dbReference>
<dbReference type="GO" id="GO:0002931">
    <property type="term" value="P:response to ischemia"/>
    <property type="evidence" value="ECO:0000250"/>
    <property type="project" value="UniProtKB"/>
</dbReference>
<dbReference type="CDD" id="cd01926">
    <property type="entry name" value="cyclophilin_ABH_like"/>
    <property type="match status" value="1"/>
</dbReference>
<dbReference type="FunFam" id="2.40.100.10:FF:000002">
    <property type="entry name" value="Peptidyl-prolyl cis-trans isomerase"/>
    <property type="match status" value="1"/>
</dbReference>
<dbReference type="Gene3D" id="2.40.100.10">
    <property type="entry name" value="Cyclophilin-like"/>
    <property type="match status" value="1"/>
</dbReference>
<dbReference type="InterPro" id="IPR029000">
    <property type="entry name" value="Cyclophilin-like_dom_sf"/>
</dbReference>
<dbReference type="InterPro" id="IPR020892">
    <property type="entry name" value="Cyclophilin-type_PPIase_CS"/>
</dbReference>
<dbReference type="InterPro" id="IPR002130">
    <property type="entry name" value="Cyclophilin-type_PPIase_dom"/>
</dbReference>
<dbReference type="PANTHER" id="PTHR11071">
    <property type="entry name" value="PEPTIDYL-PROLYL CIS-TRANS ISOMERASE"/>
    <property type="match status" value="1"/>
</dbReference>
<dbReference type="PANTHER" id="PTHR11071:SF408">
    <property type="entry name" value="PEPTIDYL-PROLYL CIS-TRANS ISOMERASE F, MITOCHONDRIAL"/>
    <property type="match status" value="1"/>
</dbReference>
<dbReference type="Pfam" id="PF00160">
    <property type="entry name" value="Pro_isomerase"/>
    <property type="match status" value="1"/>
</dbReference>
<dbReference type="PRINTS" id="PR00153">
    <property type="entry name" value="CSAPPISMRASE"/>
</dbReference>
<dbReference type="SUPFAM" id="SSF50891">
    <property type="entry name" value="Cyclophilin-like"/>
    <property type="match status" value="1"/>
</dbReference>
<dbReference type="PROSITE" id="PS00170">
    <property type="entry name" value="CSA_PPIASE_1"/>
    <property type="match status" value="1"/>
</dbReference>
<dbReference type="PROSITE" id="PS50072">
    <property type="entry name" value="CSA_PPIASE_2"/>
    <property type="match status" value="1"/>
</dbReference>
<comment type="function">
    <text evidence="2 3">PPIase that catalyzes the cis-trans isomerization of proline imidic peptide bonds in oligopeptides and may therefore assist protein folding. Involved in regulation of the mitochondrial permeability transition pore (mPTP). It is proposed that its association with the mPTP is masking a binding site for inhibiting inorganic phosphate (Pi) and promotes the open probability of the mPTP leading to apoptosis or necrosis; the requirement of the PPIase activity for this function is debated. In cooperation with mitochondrial p53/TP53 is involved in activating oxidative stress-induced necrosis (By similarity). Involved in modulation of mitochondrial membrane F(1)F(0) ATP synthase activity and regulation of mitochondrial matrix adenine nucleotide levels (By similarity). Has anti-apoptotic activity independently of mPTP and in cooperation with BCL2 inhibits cytochrome c-dependent apoptosis (By similarity).</text>
</comment>
<comment type="catalytic activity">
    <reaction evidence="2">
        <text>[protein]-peptidylproline (omega=180) = [protein]-peptidylproline (omega=0)</text>
        <dbReference type="Rhea" id="RHEA:16237"/>
        <dbReference type="Rhea" id="RHEA-COMP:10747"/>
        <dbReference type="Rhea" id="RHEA-COMP:10748"/>
        <dbReference type="ChEBI" id="CHEBI:83833"/>
        <dbReference type="ChEBI" id="CHEBI:83834"/>
        <dbReference type="EC" id="5.2.1.8"/>
    </reaction>
</comment>
<comment type="activity regulation">
    <text evidence="2">Binds cyclosporin A (CsA). Is displaced by CsA from the mPTP leading to a lower open probability of the mPTP (By similarity).</text>
</comment>
<comment type="subunit">
    <text evidence="1 2 3 5">Associates with the mitochondrial membrane ATP synthase F(1)F(0) ATP synthase; the association is increased by inorganic phosphate (Pi) and decreased by cyclosporin A (CsA) (By similarity). Interacts with ATP5F1B; ATP5PD and ATP5PO (PubMed:19801635). Interacts with SLC25A3; the interaction is impaired by CsA (By similarity). Interacts with BCL2; the interaction is impaired by CsA. Interacts with TP53; the association implicates preferentially tetrameric TP53, is induced by oxidative stress and is impaired by CsA. Interacts with C1QBP. Interacts with MCUR1. Component of the mitochondrial permeability transition pore complex (mPTPC), at least composed of SPG7, VDAC1 and PPIF. Interacts with SPG7 (By similarity).</text>
</comment>
<comment type="subcellular location">
    <subcellularLocation>
        <location evidence="1">Mitochondrion matrix</location>
    </subcellularLocation>
</comment>
<comment type="PTM">
    <text evidence="3">Acetylated at Lys-168; deacetylated at Lys-168 by SIRT3.</text>
</comment>
<comment type="similarity">
    <text evidence="6">Belongs to the cyclophilin-type PPIase family.</text>
</comment>
<comment type="sequence caution" evidence="6">
    <conflict type="frameshift">
        <sequence resource="EMBL-CDS" id="AAT02663"/>
    </conflict>
</comment>
<accession>P30404</accession>
<accession>Q6PMK8</accession>
<proteinExistence type="evidence at protein level"/>
<keyword id="KW-0007">Acetylation</keyword>
<keyword id="KW-0053">Apoptosis</keyword>
<keyword id="KW-0903">Direct protein sequencing</keyword>
<keyword id="KW-0413">Isomerase</keyword>
<keyword id="KW-0496">Mitochondrion</keyword>
<keyword id="KW-1210">Necrosis</keyword>
<keyword id="KW-1185">Reference proteome</keyword>
<keyword id="KW-0697">Rotamase</keyword>
<keyword id="KW-0702">S-nitrosylation</keyword>
<keyword id="KW-0809">Transit peptide</keyword>
<gene>
    <name type="primary">PPIF</name>
    <name type="synonym">CYP3</name>
</gene>
<organism>
    <name type="scientific">Bos taurus</name>
    <name type="common">Bovine</name>
    <dbReference type="NCBI Taxonomy" id="9913"/>
    <lineage>
        <taxon>Eukaryota</taxon>
        <taxon>Metazoa</taxon>
        <taxon>Chordata</taxon>
        <taxon>Craniata</taxon>
        <taxon>Vertebrata</taxon>
        <taxon>Euteleostomi</taxon>
        <taxon>Mammalia</taxon>
        <taxon>Eutheria</taxon>
        <taxon>Laurasiatheria</taxon>
        <taxon>Artiodactyla</taxon>
        <taxon>Ruminantia</taxon>
        <taxon>Pecora</taxon>
        <taxon>Bovidae</taxon>
        <taxon>Bovinae</taxon>
        <taxon>Bos</taxon>
    </lineage>
</organism>
<reference key="1">
    <citation type="submission" date="2004-04" db="EMBL/GenBank/DDBJ databases">
        <title>Bos taurus peptidylprolyl isomerase F.</title>
        <authorList>
            <person name="Zhang W."/>
            <person name="Xiao Y."/>
            <person name="Ren Z."/>
            <person name="Wang J."/>
            <person name="Wu Z."/>
            <person name="Cheng J."/>
            <person name="Wang Y."/>
        </authorList>
    </citation>
    <scope>NUCLEOTIDE SEQUENCE [MRNA]</scope>
</reference>
<reference key="2">
    <citation type="submission" date="2006-12" db="EMBL/GenBank/DDBJ databases">
        <title>Bovine genome sequencing program: Full-length cDNA sequencing.</title>
        <authorList>
            <person name="Moore S."/>
            <person name="Alexander L."/>
            <person name="Brownstein M."/>
            <person name="Guan L."/>
            <person name="Lobo S."/>
            <person name="Meng Y."/>
            <person name="Tanaguchi M."/>
            <person name="Wang Z."/>
            <person name="Yu J."/>
            <person name="Prange C."/>
            <person name="Schreiber K."/>
            <person name="Shenmen C."/>
            <person name="Wagner L."/>
            <person name="Bala M."/>
            <person name="Barbazuk S."/>
            <person name="Barber S."/>
            <person name="Babakaiff R."/>
            <person name="Beland J."/>
            <person name="Chun E."/>
            <person name="Del Rio L."/>
            <person name="Gibson S."/>
            <person name="Hanson R."/>
            <person name="Kirkpatrick R."/>
            <person name="Liu J."/>
            <person name="Matsuo C."/>
            <person name="Mayo M."/>
            <person name="Santos R.R."/>
            <person name="Stott J."/>
            <person name="Tsai M."/>
            <person name="Wong D."/>
            <person name="Siddiqui A."/>
            <person name="Holt R."/>
            <person name="Jones S.J."/>
            <person name="Marra M.A."/>
        </authorList>
    </citation>
    <scope>NUCLEOTIDE SEQUENCE [LARGE SCALE MRNA]</scope>
    <source>
        <strain>Hereford</strain>
        <tissue>Colon</tissue>
    </source>
</reference>
<reference key="3">
    <citation type="journal article" date="2009" name="Science">
        <title>The genome sequence of taurine cattle: a window to ruminant biology and evolution.</title>
        <authorList>
            <consortium name="The bovine genome sequencing and analysis consortium"/>
        </authorList>
    </citation>
    <scope>NUCLEOTIDE SEQUENCE [LARGE SCALE GENOMIC DNA]</scope>
    <source>
        <strain>Hereford</strain>
    </source>
</reference>
<reference key="4">
    <citation type="journal article" date="1993" name="Biochem. Biophys. Res. Commun.">
        <title>Isolation of mitochondrial cyclophilin from bovine heart.</title>
        <authorList>
            <person name="Inoue T."/>
            <person name="Yoshida Y."/>
            <person name="Isaka Y."/>
            <person name="Tagawa K."/>
        </authorList>
    </citation>
    <scope>PRELIMINARY PARTIAL PROTEIN SEQUENCE</scope>
    <source>
        <tissue>Heart</tissue>
    </source>
</reference>
<reference key="5">
    <citation type="journal article" date="2009" name="J. Biol. Chem.">
        <title>Cyclophilin D modulates mitochondrial F0F1-ATP synthase by interacting with the lateral stalk of the complex.</title>
        <authorList>
            <person name="Giorgio V."/>
            <person name="Bisetto E."/>
            <person name="Soriano M.E."/>
            <person name="Dabbeni-Sala F."/>
            <person name="Basso E."/>
            <person name="Petronilli V."/>
            <person name="Forte M.A."/>
            <person name="Bernardi P."/>
            <person name="Lippe G."/>
        </authorList>
    </citation>
    <scope>INTERACTION WITH ATP5F1B; ATP5PD AND ATP5PO</scope>
</reference>
<sequence>MMLALRCGPRLLGLLSGPRSAHLRLPAVRACSSGSGSHGSSSSSGNPLVYLDVGADGQPLGRVVLELKADVVPKTAENFRALCTGEKGFGYKGSTFHRVIPSFMCQAGDFTNHNGTGGKSIYGSRFPDENFKLKHEGPGVLSMANAGPNTNGSQFFICTIKTDWLDGKHVVFGHVKEGMDVVKKIESFGSKSGKTSKKIVITDCGQLS</sequence>